<gene>
    <name type="primary">ube2s-b</name>
    <name type="synonym">ube2s.1-b</name>
</gene>
<proteinExistence type="evidence at transcript level"/>
<sequence>MNSNVENLPPHIIRRVYKEVSTLTSDPPEGIKIIPNEEDITDVQVNIEGPEGTPYAGGMFRMKLILGKDFPAAPPKGYFLTKIFHPNVSNNGEICVNVLKKDWKAELGIRHVLLTIKCLLIHPNPESALNEEAGRLLLENYEEYASRARLMTDIHAQGTSLRGKDPTDPCSSASTPVVSGDGPMAKKHAGDRDKKLAAKKKTDKKRALRRL</sequence>
<comment type="function">
    <text evidence="1">Catalyzes the covalent attachment of ubiquitin to other proteins. Acts as an essential factor of the anaphase promoting complex/cyclosome (APC/C), a cell cycle-regulated ubiquitin ligase that controls progression through mitosis. Acts by specifically elongating 'Lys-11'-linked polyubiquitin chains initiated by the E2 enzyme ube2c/ubch10 on APC/C substrates, enhancing the degradation of APC/C substrates by the proteasome and promoting mitotic exit.</text>
</comment>
<comment type="catalytic activity">
    <reaction evidence="1 2">
        <text>S-ubiquitinyl-[E1 ubiquitin-activating enzyme]-L-cysteine + [E2 ubiquitin-conjugating enzyme]-L-cysteine = [E1 ubiquitin-activating enzyme]-L-cysteine + S-ubiquitinyl-[E2 ubiquitin-conjugating enzyme]-L-cysteine.</text>
        <dbReference type="EC" id="2.3.2.23"/>
    </reaction>
</comment>
<comment type="pathway">
    <text evidence="1">Protein modification; protein ubiquitination.</text>
</comment>
<comment type="similarity">
    <text evidence="1">Belongs to the ubiquitin-conjugating enzyme family.</text>
</comment>
<evidence type="ECO:0000255" key="1">
    <source>
        <dbReference type="PROSITE-ProRule" id="PRU00388"/>
    </source>
</evidence>
<evidence type="ECO:0000255" key="2">
    <source>
        <dbReference type="PROSITE-ProRule" id="PRU10133"/>
    </source>
</evidence>
<evidence type="ECO:0000256" key="3">
    <source>
        <dbReference type="SAM" id="MobiDB-lite"/>
    </source>
</evidence>
<feature type="chain" id="PRO_0000390432" description="Ubiquitin-conjugating enzyme E2 S-B">
    <location>
        <begin position="1"/>
        <end position="211"/>
    </location>
</feature>
<feature type="domain" description="UBC core" evidence="1">
    <location>
        <begin position="11"/>
        <end position="157"/>
    </location>
</feature>
<feature type="region of interest" description="Disordered" evidence="3">
    <location>
        <begin position="158"/>
        <end position="211"/>
    </location>
</feature>
<feature type="compositionally biased region" description="Basic residues" evidence="3">
    <location>
        <begin position="197"/>
        <end position="211"/>
    </location>
</feature>
<feature type="active site" description="Glycyl thioester intermediate" evidence="1 2">
    <location>
        <position position="95"/>
    </location>
</feature>
<dbReference type="EC" id="2.3.2.23"/>
<dbReference type="EMBL" id="BC041263">
    <property type="protein sequence ID" value="AAH41263.1"/>
    <property type="molecule type" value="mRNA"/>
</dbReference>
<dbReference type="EMBL" id="BC106317">
    <property type="protein sequence ID" value="AAI06318.1"/>
    <property type="molecule type" value="mRNA"/>
</dbReference>
<dbReference type="SMR" id="Q8AVU2"/>
<dbReference type="BioGRID" id="97318">
    <property type="interactions" value="5"/>
</dbReference>
<dbReference type="DNASU" id="379075"/>
<dbReference type="GeneID" id="379075"/>
<dbReference type="KEGG" id="xla:379075"/>
<dbReference type="AGR" id="Xenbase:XB-GENE-1008024"/>
<dbReference type="CTD" id="379075"/>
<dbReference type="Xenbase" id="XB-GENE-1008024">
    <property type="gene designation" value="ube2s.S"/>
</dbReference>
<dbReference type="OMA" id="RMIQEPQ"/>
<dbReference type="OrthoDB" id="10069349at2759"/>
<dbReference type="UniPathway" id="UPA00143"/>
<dbReference type="Proteomes" id="UP000186698">
    <property type="component" value="Chromosome 7S"/>
</dbReference>
<dbReference type="Bgee" id="379075">
    <property type="expression patterns" value="Expressed in blastula and 19 other cell types or tissues"/>
</dbReference>
<dbReference type="GO" id="GO:0005680">
    <property type="term" value="C:anaphase-promoting complex"/>
    <property type="evidence" value="ECO:0000250"/>
    <property type="project" value="UniProtKB"/>
</dbReference>
<dbReference type="GO" id="GO:0005524">
    <property type="term" value="F:ATP binding"/>
    <property type="evidence" value="ECO:0007669"/>
    <property type="project" value="UniProtKB-KW"/>
</dbReference>
<dbReference type="GO" id="GO:0061631">
    <property type="term" value="F:ubiquitin conjugating enzyme activity"/>
    <property type="evidence" value="ECO:0007669"/>
    <property type="project" value="UniProtKB-EC"/>
</dbReference>
<dbReference type="GO" id="GO:0031145">
    <property type="term" value="P:anaphase-promoting complex-dependent catabolic process"/>
    <property type="evidence" value="ECO:0000250"/>
    <property type="project" value="UniProtKB"/>
</dbReference>
<dbReference type="GO" id="GO:0051301">
    <property type="term" value="P:cell division"/>
    <property type="evidence" value="ECO:0007669"/>
    <property type="project" value="UniProtKB-KW"/>
</dbReference>
<dbReference type="GO" id="GO:0010458">
    <property type="term" value="P:exit from mitosis"/>
    <property type="evidence" value="ECO:0000250"/>
    <property type="project" value="UniProtKB"/>
</dbReference>
<dbReference type="GO" id="GO:0010994">
    <property type="term" value="P:free ubiquitin chain polymerization"/>
    <property type="evidence" value="ECO:0000250"/>
    <property type="project" value="UniProtKB"/>
</dbReference>
<dbReference type="GO" id="GO:1904668">
    <property type="term" value="P:positive regulation of ubiquitin protein ligase activity"/>
    <property type="evidence" value="ECO:0000250"/>
    <property type="project" value="UniProtKB"/>
</dbReference>
<dbReference type="GO" id="GO:0070979">
    <property type="term" value="P:protein K11-linked ubiquitination"/>
    <property type="evidence" value="ECO:0000250"/>
    <property type="project" value="UniProtKB"/>
</dbReference>
<dbReference type="CDD" id="cd23804">
    <property type="entry name" value="UBCc_UBE2S"/>
    <property type="match status" value="1"/>
</dbReference>
<dbReference type="FunFam" id="3.10.110.10:FF:000034">
    <property type="entry name" value="Ubiquitin-conjugating enzyme E2 S"/>
    <property type="match status" value="1"/>
</dbReference>
<dbReference type="Gene3D" id="3.10.110.10">
    <property type="entry name" value="Ubiquitin Conjugating Enzyme"/>
    <property type="match status" value="1"/>
</dbReference>
<dbReference type="InterPro" id="IPR050113">
    <property type="entry name" value="Ub_conjugating_enzyme"/>
</dbReference>
<dbReference type="InterPro" id="IPR000608">
    <property type="entry name" value="UBQ-conjugat_E2_core"/>
</dbReference>
<dbReference type="InterPro" id="IPR023313">
    <property type="entry name" value="UBQ-conjugating_AS"/>
</dbReference>
<dbReference type="InterPro" id="IPR016135">
    <property type="entry name" value="UBQ-conjugating_enzyme/RWD"/>
</dbReference>
<dbReference type="PANTHER" id="PTHR24067">
    <property type="entry name" value="UBIQUITIN-CONJUGATING ENZYME E2"/>
    <property type="match status" value="1"/>
</dbReference>
<dbReference type="Pfam" id="PF00179">
    <property type="entry name" value="UQ_con"/>
    <property type="match status" value="1"/>
</dbReference>
<dbReference type="SMART" id="SM00212">
    <property type="entry name" value="UBCc"/>
    <property type="match status" value="1"/>
</dbReference>
<dbReference type="SUPFAM" id="SSF54495">
    <property type="entry name" value="UBC-like"/>
    <property type="match status" value="1"/>
</dbReference>
<dbReference type="PROSITE" id="PS00183">
    <property type="entry name" value="UBC_1"/>
    <property type="match status" value="1"/>
</dbReference>
<dbReference type="PROSITE" id="PS50127">
    <property type="entry name" value="UBC_2"/>
    <property type="match status" value="1"/>
</dbReference>
<keyword id="KW-0067">ATP-binding</keyword>
<keyword id="KW-0131">Cell cycle</keyword>
<keyword id="KW-0132">Cell division</keyword>
<keyword id="KW-0547">Nucleotide-binding</keyword>
<keyword id="KW-1185">Reference proteome</keyword>
<keyword id="KW-0808">Transferase</keyword>
<keyword id="KW-0833">Ubl conjugation pathway</keyword>
<name>UB2SB_XENLA</name>
<organism>
    <name type="scientific">Xenopus laevis</name>
    <name type="common">African clawed frog</name>
    <dbReference type="NCBI Taxonomy" id="8355"/>
    <lineage>
        <taxon>Eukaryota</taxon>
        <taxon>Metazoa</taxon>
        <taxon>Chordata</taxon>
        <taxon>Craniata</taxon>
        <taxon>Vertebrata</taxon>
        <taxon>Euteleostomi</taxon>
        <taxon>Amphibia</taxon>
        <taxon>Batrachia</taxon>
        <taxon>Anura</taxon>
        <taxon>Pipoidea</taxon>
        <taxon>Pipidae</taxon>
        <taxon>Xenopodinae</taxon>
        <taxon>Xenopus</taxon>
        <taxon>Xenopus</taxon>
    </lineage>
</organism>
<accession>Q8AVU2</accession>
<reference key="1">
    <citation type="submission" date="2005-10" db="EMBL/GenBank/DDBJ databases">
        <authorList>
            <consortium name="NIH - Xenopus Gene Collection (XGC) project"/>
        </authorList>
    </citation>
    <scope>NUCLEOTIDE SEQUENCE [LARGE SCALE MRNA]</scope>
    <source>
        <tissue>Embryo</tissue>
        <tissue>Testis</tissue>
    </source>
</reference>
<protein>
    <recommendedName>
        <fullName>Ubiquitin-conjugating enzyme E2 S-B</fullName>
        <ecNumber>2.3.2.23</ecNumber>
    </recommendedName>
    <alternativeName>
        <fullName>E2 ubiquitin-conjugating enzyme S-B</fullName>
    </alternativeName>
    <alternativeName>
        <fullName>Ubiquitin carrier protein S-B</fullName>
    </alternativeName>
    <alternativeName>
        <fullName>Ubiquitin-protein ligase S-B</fullName>
    </alternativeName>
</protein>